<name>HSLV_MYXXA</name>
<dbReference type="EC" id="3.4.25.2" evidence="1"/>
<dbReference type="EMBL" id="AY204472">
    <property type="protein sequence ID" value="AAO22924.1"/>
    <property type="molecule type" value="Genomic_DNA"/>
</dbReference>
<dbReference type="RefSeq" id="WP_011553068.1">
    <property type="nucleotide sequence ID" value="NZ_JABFNT010000049.1"/>
</dbReference>
<dbReference type="SMR" id="Q84F94"/>
<dbReference type="MEROPS" id="T01.006"/>
<dbReference type="GeneID" id="41360373"/>
<dbReference type="OMA" id="WRTDKML"/>
<dbReference type="GO" id="GO:0009376">
    <property type="term" value="C:HslUV protease complex"/>
    <property type="evidence" value="ECO:0007669"/>
    <property type="project" value="UniProtKB-UniRule"/>
</dbReference>
<dbReference type="GO" id="GO:0005839">
    <property type="term" value="C:proteasome core complex"/>
    <property type="evidence" value="ECO:0007669"/>
    <property type="project" value="InterPro"/>
</dbReference>
<dbReference type="GO" id="GO:0046872">
    <property type="term" value="F:metal ion binding"/>
    <property type="evidence" value="ECO:0007669"/>
    <property type="project" value="UniProtKB-KW"/>
</dbReference>
<dbReference type="GO" id="GO:0004298">
    <property type="term" value="F:threonine-type endopeptidase activity"/>
    <property type="evidence" value="ECO:0007669"/>
    <property type="project" value="UniProtKB-KW"/>
</dbReference>
<dbReference type="GO" id="GO:0051603">
    <property type="term" value="P:proteolysis involved in protein catabolic process"/>
    <property type="evidence" value="ECO:0007669"/>
    <property type="project" value="InterPro"/>
</dbReference>
<dbReference type="CDD" id="cd01913">
    <property type="entry name" value="protease_HslV"/>
    <property type="match status" value="1"/>
</dbReference>
<dbReference type="Gene3D" id="3.60.20.10">
    <property type="entry name" value="Glutamine Phosphoribosylpyrophosphate, subunit 1, domain 1"/>
    <property type="match status" value="1"/>
</dbReference>
<dbReference type="HAMAP" id="MF_00248">
    <property type="entry name" value="HslV"/>
    <property type="match status" value="1"/>
</dbReference>
<dbReference type="InterPro" id="IPR022281">
    <property type="entry name" value="ATP-dep_Prtase_HsIV_su"/>
</dbReference>
<dbReference type="InterPro" id="IPR029055">
    <property type="entry name" value="Ntn_hydrolases_N"/>
</dbReference>
<dbReference type="InterPro" id="IPR001353">
    <property type="entry name" value="Proteasome_sua/b"/>
</dbReference>
<dbReference type="InterPro" id="IPR023333">
    <property type="entry name" value="Proteasome_suB-type"/>
</dbReference>
<dbReference type="NCBIfam" id="TIGR03692">
    <property type="entry name" value="ATP_dep_HslV"/>
    <property type="match status" value="1"/>
</dbReference>
<dbReference type="NCBIfam" id="NF003964">
    <property type="entry name" value="PRK05456.1"/>
    <property type="match status" value="1"/>
</dbReference>
<dbReference type="PANTHER" id="PTHR32194:SF0">
    <property type="entry name" value="ATP-DEPENDENT PROTEASE SUBUNIT HSLV"/>
    <property type="match status" value="1"/>
</dbReference>
<dbReference type="PANTHER" id="PTHR32194">
    <property type="entry name" value="METALLOPROTEASE TLDD"/>
    <property type="match status" value="1"/>
</dbReference>
<dbReference type="Pfam" id="PF00227">
    <property type="entry name" value="Proteasome"/>
    <property type="match status" value="1"/>
</dbReference>
<dbReference type="PIRSF" id="PIRSF039093">
    <property type="entry name" value="HslV"/>
    <property type="match status" value="1"/>
</dbReference>
<dbReference type="SUPFAM" id="SSF56235">
    <property type="entry name" value="N-terminal nucleophile aminohydrolases (Ntn hydrolases)"/>
    <property type="match status" value="1"/>
</dbReference>
<dbReference type="PROSITE" id="PS51476">
    <property type="entry name" value="PROTEASOME_BETA_2"/>
    <property type="match status" value="1"/>
</dbReference>
<evidence type="ECO:0000255" key="1">
    <source>
        <dbReference type="HAMAP-Rule" id="MF_00248"/>
    </source>
</evidence>
<accession>Q84F94</accession>
<gene>
    <name evidence="1" type="primary">hslV</name>
</gene>
<protein>
    <recommendedName>
        <fullName evidence="1">ATP-dependent protease subunit HslV</fullName>
        <ecNumber evidence="1">3.4.25.2</ecNumber>
    </recommendedName>
</protein>
<organism>
    <name type="scientific">Myxococcus xanthus</name>
    <dbReference type="NCBI Taxonomy" id="34"/>
    <lineage>
        <taxon>Bacteria</taxon>
        <taxon>Pseudomonadati</taxon>
        <taxon>Myxococcota</taxon>
        <taxon>Myxococcia</taxon>
        <taxon>Myxococcales</taxon>
        <taxon>Cystobacterineae</taxon>
        <taxon>Myxococcaceae</taxon>
        <taxon>Myxococcus</taxon>
    </lineage>
</organism>
<reference key="1">
    <citation type="journal article" date="2003" name="Mol. Microbiol.">
        <title>Identification of genes required for adventurous gliding motility in Myxococcus xanthus with the transposable element mariner.</title>
        <authorList>
            <person name="Youderian P.A."/>
            <person name="Burke N."/>
            <person name="White D.J."/>
            <person name="Hartzell P.L."/>
        </authorList>
    </citation>
    <scope>NUCLEOTIDE SEQUENCE [GENOMIC DNA]</scope>
</reference>
<sequence>MFHGTTILCVRRDGKVAIASDGQVSLEKTVMKNTAKKVRRLGEGQVLAGFAGSTADAFTLFERFEAKLKEHQKNMARACVELGKDWRTDRFLRRLEALLIVADKEKTFILSGAGDVIEPDYGIAAVGSGGPYAFAAARALMAHTQMSARDVVHQSLTIAGEIDIYTNANISIEEL</sequence>
<feature type="chain" id="PRO_0000148125" description="ATP-dependent protease subunit HslV">
    <location>
        <begin position="1"/>
        <end position="175"/>
    </location>
</feature>
<feature type="active site" evidence="1">
    <location>
        <position position="5"/>
    </location>
</feature>
<feature type="binding site" evidence="1">
    <location>
        <position position="160"/>
    </location>
    <ligand>
        <name>Na(+)</name>
        <dbReference type="ChEBI" id="CHEBI:29101"/>
    </ligand>
</feature>
<feature type="binding site" evidence="1">
    <location>
        <position position="163"/>
    </location>
    <ligand>
        <name>Na(+)</name>
        <dbReference type="ChEBI" id="CHEBI:29101"/>
    </ligand>
</feature>
<feature type="binding site" evidence="1">
    <location>
        <position position="166"/>
    </location>
    <ligand>
        <name>Na(+)</name>
        <dbReference type="ChEBI" id="CHEBI:29101"/>
    </ligand>
</feature>
<keyword id="KW-0021">Allosteric enzyme</keyword>
<keyword id="KW-0963">Cytoplasm</keyword>
<keyword id="KW-0378">Hydrolase</keyword>
<keyword id="KW-0479">Metal-binding</keyword>
<keyword id="KW-0645">Protease</keyword>
<keyword id="KW-0915">Sodium</keyword>
<keyword id="KW-0888">Threonine protease</keyword>
<comment type="function">
    <text evidence="1">Protease subunit of a proteasome-like degradation complex believed to be a general protein degrading machinery.</text>
</comment>
<comment type="catalytic activity">
    <reaction evidence="1">
        <text>ATP-dependent cleavage of peptide bonds with broad specificity.</text>
        <dbReference type="EC" id="3.4.25.2"/>
    </reaction>
</comment>
<comment type="activity regulation">
    <text evidence="1">Allosterically activated by HslU binding.</text>
</comment>
<comment type="subunit">
    <text evidence="1">A double ring-shaped homohexamer of HslV is capped on each side by a ring-shaped HslU homohexamer. The assembly of the HslU/HslV complex is dependent on binding of ATP.</text>
</comment>
<comment type="subcellular location">
    <subcellularLocation>
        <location evidence="1">Cytoplasm</location>
    </subcellularLocation>
</comment>
<comment type="similarity">
    <text evidence="1">Belongs to the peptidase T1B family. HslV subfamily.</text>
</comment>
<proteinExistence type="inferred from homology"/>